<proteinExistence type="inferred from homology"/>
<reference key="1">
    <citation type="journal article" date="2008" name="Genome Res.">
        <title>Insights from the complete genome sequence of Mycobacterium marinum on the evolution of Mycobacterium tuberculosis.</title>
        <authorList>
            <person name="Stinear T.P."/>
            <person name="Seemann T."/>
            <person name="Harrison P.F."/>
            <person name="Jenkin G.A."/>
            <person name="Davies J.K."/>
            <person name="Johnson P.D."/>
            <person name="Abdellah Z."/>
            <person name="Arrowsmith C."/>
            <person name="Chillingworth T."/>
            <person name="Churcher C."/>
            <person name="Clarke K."/>
            <person name="Cronin A."/>
            <person name="Davis P."/>
            <person name="Goodhead I."/>
            <person name="Holroyd N."/>
            <person name="Jagels K."/>
            <person name="Lord A."/>
            <person name="Moule S."/>
            <person name="Mungall K."/>
            <person name="Norbertczak H."/>
            <person name="Quail M.A."/>
            <person name="Rabbinowitsch E."/>
            <person name="Walker D."/>
            <person name="White B."/>
            <person name="Whitehead S."/>
            <person name="Small P.L."/>
            <person name="Brosch R."/>
            <person name="Ramakrishnan L."/>
            <person name="Fischbach M.A."/>
            <person name="Parkhill J."/>
            <person name="Cole S.T."/>
        </authorList>
    </citation>
    <scope>NUCLEOTIDE SEQUENCE [LARGE SCALE GENOMIC DNA]</scope>
    <source>
        <strain>ATCC BAA-535 / M</strain>
    </source>
</reference>
<name>COAX_MYCMM</name>
<sequence length="272" mass="29139">MLLAIDVRNTHTVVGLLSGAKQHAKVVQQWRIRTESEVTADELALTIDGLIGEDSERLTGATGLSTVPSVLHEVRIMLEQYWPSVPHVLIEPGVRTGIPLLVDNPKEVGADRIVNCLAAYQQFAKAAIVVDFGSSICVDVVSAKGEFLGGAIAPGVQVSSDAAAARSAALRRVELARPRSVVGKNTVECMQAGAVFGFAGLVDGLVARIREDVKGFSADDDVAVVATGHTAPLLLPELHSVEHFDEHLTLHGLRLVFERNREAQRGRLKPAR</sequence>
<comment type="function">
    <text evidence="1">Catalyzes the phosphorylation of pantothenate (Pan), the first step in CoA biosynthesis.</text>
</comment>
<comment type="catalytic activity">
    <reaction evidence="1">
        <text>(R)-pantothenate + ATP = (R)-4'-phosphopantothenate + ADP + H(+)</text>
        <dbReference type="Rhea" id="RHEA:16373"/>
        <dbReference type="ChEBI" id="CHEBI:10986"/>
        <dbReference type="ChEBI" id="CHEBI:15378"/>
        <dbReference type="ChEBI" id="CHEBI:29032"/>
        <dbReference type="ChEBI" id="CHEBI:30616"/>
        <dbReference type="ChEBI" id="CHEBI:456216"/>
        <dbReference type="EC" id="2.7.1.33"/>
    </reaction>
</comment>
<comment type="cofactor">
    <cofactor evidence="1">
        <name>NH4(+)</name>
        <dbReference type="ChEBI" id="CHEBI:28938"/>
    </cofactor>
    <cofactor evidence="1">
        <name>K(+)</name>
        <dbReference type="ChEBI" id="CHEBI:29103"/>
    </cofactor>
    <text evidence="1">A monovalent cation. Ammonium or potassium.</text>
</comment>
<comment type="pathway">
    <text evidence="1">Cofactor biosynthesis; coenzyme A biosynthesis; CoA from (R)-pantothenate: step 1/5.</text>
</comment>
<comment type="subunit">
    <text evidence="1">Homodimer.</text>
</comment>
<comment type="subcellular location">
    <subcellularLocation>
        <location evidence="1">Cytoplasm</location>
    </subcellularLocation>
</comment>
<comment type="similarity">
    <text evidence="1">Belongs to the type III pantothenate kinase family.</text>
</comment>
<evidence type="ECO:0000255" key="1">
    <source>
        <dbReference type="HAMAP-Rule" id="MF_01274"/>
    </source>
</evidence>
<gene>
    <name evidence="1" type="primary">coaX</name>
    <name type="ordered locus">MMAR_5103</name>
</gene>
<protein>
    <recommendedName>
        <fullName evidence="1">Type III pantothenate kinase</fullName>
        <ecNumber evidence="1">2.7.1.33</ecNumber>
    </recommendedName>
    <alternativeName>
        <fullName evidence="1">PanK-III</fullName>
    </alternativeName>
    <alternativeName>
        <fullName evidence="1">Pantothenic acid kinase</fullName>
    </alternativeName>
</protein>
<keyword id="KW-0067">ATP-binding</keyword>
<keyword id="KW-0173">Coenzyme A biosynthesis</keyword>
<keyword id="KW-0963">Cytoplasm</keyword>
<keyword id="KW-0418">Kinase</keyword>
<keyword id="KW-0479">Metal-binding</keyword>
<keyword id="KW-0547">Nucleotide-binding</keyword>
<keyword id="KW-0630">Potassium</keyword>
<keyword id="KW-1185">Reference proteome</keyword>
<keyword id="KW-0808">Transferase</keyword>
<organism>
    <name type="scientific">Mycobacterium marinum (strain ATCC BAA-535 / M)</name>
    <dbReference type="NCBI Taxonomy" id="216594"/>
    <lineage>
        <taxon>Bacteria</taxon>
        <taxon>Bacillati</taxon>
        <taxon>Actinomycetota</taxon>
        <taxon>Actinomycetes</taxon>
        <taxon>Mycobacteriales</taxon>
        <taxon>Mycobacteriaceae</taxon>
        <taxon>Mycobacterium</taxon>
        <taxon>Mycobacterium ulcerans group</taxon>
    </lineage>
</organism>
<feature type="chain" id="PRO_1000140250" description="Type III pantothenate kinase">
    <location>
        <begin position="1"/>
        <end position="272"/>
    </location>
</feature>
<feature type="active site" description="Proton acceptor" evidence="1">
    <location>
        <position position="111"/>
    </location>
</feature>
<feature type="binding site" evidence="1">
    <location>
        <begin position="6"/>
        <end position="13"/>
    </location>
    <ligand>
        <name>ATP</name>
        <dbReference type="ChEBI" id="CHEBI:30616"/>
    </ligand>
</feature>
<feature type="binding site" evidence="1">
    <location>
        <begin position="109"/>
        <end position="112"/>
    </location>
    <ligand>
        <name>substrate</name>
    </ligand>
</feature>
<feature type="binding site" evidence="1">
    <location>
        <position position="131"/>
    </location>
    <ligand>
        <name>K(+)</name>
        <dbReference type="ChEBI" id="CHEBI:29103"/>
    </ligand>
</feature>
<feature type="binding site" evidence="1">
    <location>
        <position position="134"/>
    </location>
    <ligand>
        <name>ATP</name>
        <dbReference type="ChEBI" id="CHEBI:30616"/>
    </ligand>
</feature>
<feature type="binding site" evidence="1">
    <location>
        <position position="186"/>
    </location>
    <ligand>
        <name>substrate</name>
    </ligand>
</feature>
<accession>B2HJ44</accession>
<dbReference type="EC" id="2.7.1.33" evidence="1"/>
<dbReference type="EMBL" id="CP000854">
    <property type="protein sequence ID" value="ACC43507.1"/>
    <property type="molecule type" value="Genomic_DNA"/>
</dbReference>
<dbReference type="RefSeq" id="WP_012396623.1">
    <property type="nucleotide sequence ID" value="NC_010612.1"/>
</dbReference>
<dbReference type="SMR" id="B2HJ44"/>
<dbReference type="STRING" id="216594.MMAR_5103"/>
<dbReference type="GeneID" id="34339964"/>
<dbReference type="KEGG" id="mmi:MMAR_5103"/>
<dbReference type="eggNOG" id="COG1521">
    <property type="taxonomic scope" value="Bacteria"/>
</dbReference>
<dbReference type="HOGENOM" id="CLU_066627_1_0_11"/>
<dbReference type="OrthoDB" id="9804707at2"/>
<dbReference type="UniPathway" id="UPA00241">
    <property type="reaction ID" value="UER00352"/>
</dbReference>
<dbReference type="Proteomes" id="UP000001190">
    <property type="component" value="Chromosome"/>
</dbReference>
<dbReference type="GO" id="GO:0005737">
    <property type="term" value="C:cytoplasm"/>
    <property type="evidence" value="ECO:0007669"/>
    <property type="project" value="UniProtKB-SubCell"/>
</dbReference>
<dbReference type="GO" id="GO:0005524">
    <property type="term" value="F:ATP binding"/>
    <property type="evidence" value="ECO:0007669"/>
    <property type="project" value="UniProtKB-UniRule"/>
</dbReference>
<dbReference type="GO" id="GO:0046872">
    <property type="term" value="F:metal ion binding"/>
    <property type="evidence" value="ECO:0007669"/>
    <property type="project" value="UniProtKB-KW"/>
</dbReference>
<dbReference type="GO" id="GO:0004594">
    <property type="term" value="F:pantothenate kinase activity"/>
    <property type="evidence" value="ECO:0007669"/>
    <property type="project" value="UniProtKB-UniRule"/>
</dbReference>
<dbReference type="GO" id="GO:0015937">
    <property type="term" value="P:coenzyme A biosynthetic process"/>
    <property type="evidence" value="ECO:0007669"/>
    <property type="project" value="UniProtKB-UniRule"/>
</dbReference>
<dbReference type="CDD" id="cd24015">
    <property type="entry name" value="ASKHA_NBD_PanK-III"/>
    <property type="match status" value="1"/>
</dbReference>
<dbReference type="Gene3D" id="3.30.420.40">
    <property type="match status" value="2"/>
</dbReference>
<dbReference type="HAMAP" id="MF_01274">
    <property type="entry name" value="Pantothen_kinase_3"/>
    <property type="match status" value="1"/>
</dbReference>
<dbReference type="InterPro" id="IPR043129">
    <property type="entry name" value="ATPase_NBD"/>
</dbReference>
<dbReference type="InterPro" id="IPR004619">
    <property type="entry name" value="Type_III_PanK"/>
</dbReference>
<dbReference type="NCBIfam" id="TIGR00671">
    <property type="entry name" value="baf"/>
    <property type="match status" value="1"/>
</dbReference>
<dbReference type="NCBIfam" id="NF009845">
    <property type="entry name" value="PRK13318.1-3"/>
    <property type="match status" value="1"/>
</dbReference>
<dbReference type="PANTHER" id="PTHR34265">
    <property type="entry name" value="TYPE III PANTOTHENATE KINASE"/>
    <property type="match status" value="1"/>
</dbReference>
<dbReference type="PANTHER" id="PTHR34265:SF1">
    <property type="entry name" value="TYPE III PANTOTHENATE KINASE"/>
    <property type="match status" value="1"/>
</dbReference>
<dbReference type="Pfam" id="PF03309">
    <property type="entry name" value="Pan_kinase"/>
    <property type="match status" value="1"/>
</dbReference>
<dbReference type="SUPFAM" id="SSF53067">
    <property type="entry name" value="Actin-like ATPase domain"/>
    <property type="match status" value="2"/>
</dbReference>